<keyword id="KW-0687">Ribonucleoprotein</keyword>
<keyword id="KW-0689">Ribosomal protein</keyword>
<comment type="similarity">
    <text evidence="1">Belongs to the bacterial ribosomal protein bL33 family.</text>
</comment>
<name>RL331_MYCSK</name>
<evidence type="ECO:0000255" key="1">
    <source>
        <dbReference type="HAMAP-Rule" id="MF_00294"/>
    </source>
</evidence>
<gene>
    <name evidence="1" type="primary">rpmG1</name>
    <name type="ordered locus">Mkms_0934</name>
</gene>
<feature type="chain" id="PRO_0000356560" description="Large ribosomal subunit protein bL33A">
    <location>
        <begin position="1"/>
        <end position="55"/>
    </location>
</feature>
<protein>
    <recommendedName>
        <fullName evidence="1">Large ribosomal subunit protein bL33A</fullName>
    </recommendedName>
    <alternativeName>
        <fullName evidence="1">50S ribosomal protein L33 1</fullName>
    </alternativeName>
</protein>
<dbReference type="EMBL" id="CP000518">
    <property type="protein sequence ID" value="ABL90148.1"/>
    <property type="molecule type" value="Genomic_DNA"/>
</dbReference>
<dbReference type="SMR" id="A1UBE0"/>
<dbReference type="STRING" id="189918.Mkms_0934"/>
<dbReference type="KEGG" id="mkm:Mkms_0934"/>
<dbReference type="HOGENOM" id="CLU_190949_0_2_11"/>
<dbReference type="OrthoDB" id="21586at2"/>
<dbReference type="GO" id="GO:0005737">
    <property type="term" value="C:cytoplasm"/>
    <property type="evidence" value="ECO:0007669"/>
    <property type="project" value="UniProtKB-ARBA"/>
</dbReference>
<dbReference type="GO" id="GO:1990904">
    <property type="term" value="C:ribonucleoprotein complex"/>
    <property type="evidence" value="ECO:0007669"/>
    <property type="project" value="UniProtKB-KW"/>
</dbReference>
<dbReference type="GO" id="GO:0005840">
    <property type="term" value="C:ribosome"/>
    <property type="evidence" value="ECO:0007669"/>
    <property type="project" value="UniProtKB-KW"/>
</dbReference>
<dbReference type="GO" id="GO:0003735">
    <property type="term" value="F:structural constituent of ribosome"/>
    <property type="evidence" value="ECO:0007669"/>
    <property type="project" value="InterPro"/>
</dbReference>
<dbReference type="GO" id="GO:0006412">
    <property type="term" value="P:translation"/>
    <property type="evidence" value="ECO:0007669"/>
    <property type="project" value="UniProtKB-UniRule"/>
</dbReference>
<dbReference type="Gene3D" id="2.20.28.120">
    <property type="entry name" value="Ribosomal protein L33"/>
    <property type="match status" value="1"/>
</dbReference>
<dbReference type="HAMAP" id="MF_00294">
    <property type="entry name" value="Ribosomal_bL33"/>
    <property type="match status" value="1"/>
</dbReference>
<dbReference type="InterPro" id="IPR001705">
    <property type="entry name" value="Ribosomal_bL33"/>
</dbReference>
<dbReference type="InterPro" id="IPR018264">
    <property type="entry name" value="Ribosomal_bL33_CS"/>
</dbReference>
<dbReference type="InterPro" id="IPR038584">
    <property type="entry name" value="Ribosomal_bL33_sf"/>
</dbReference>
<dbReference type="InterPro" id="IPR011332">
    <property type="entry name" value="Ribosomal_zn-bd"/>
</dbReference>
<dbReference type="NCBIfam" id="NF001764">
    <property type="entry name" value="PRK00504.1"/>
    <property type="match status" value="1"/>
</dbReference>
<dbReference type="NCBIfam" id="NF001860">
    <property type="entry name" value="PRK00595.1"/>
    <property type="match status" value="1"/>
</dbReference>
<dbReference type="NCBIfam" id="TIGR01023">
    <property type="entry name" value="rpmG_bact"/>
    <property type="match status" value="1"/>
</dbReference>
<dbReference type="PANTHER" id="PTHR43168">
    <property type="entry name" value="50S RIBOSOMAL PROTEIN L33, CHLOROPLASTIC"/>
    <property type="match status" value="1"/>
</dbReference>
<dbReference type="PANTHER" id="PTHR43168:SF2">
    <property type="entry name" value="LARGE RIBOSOMAL SUBUNIT PROTEIN BL33C"/>
    <property type="match status" value="1"/>
</dbReference>
<dbReference type="Pfam" id="PF00471">
    <property type="entry name" value="Ribosomal_L33"/>
    <property type="match status" value="1"/>
</dbReference>
<dbReference type="SUPFAM" id="SSF57829">
    <property type="entry name" value="Zn-binding ribosomal proteins"/>
    <property type="match status" value="1"/>
</dbReference>
<dbReference type="PROSITE" id="PS00582">
    <property type="entry name" value="RIBOSOMAL_L33"/>
    <property type="match status" value="1"/>
</dbReference>
<reference key="1">
    <citation type="submission" date="2006-12" db="EMBL/GenBank/DDBJ databases">
        <title>Complete sequence of chromosome of Mycobacterium sp. KMS.</title>
        <authorList>
            <consortium name="US DOE Joint Genome Institute"/>
            <person name="Copeland A."/>
            <person name="Lucas S."/>
            <person name="Lapidus A."/>
            <person name="Barry K."/>
            <person name="Detter J.C."/>
            <person name="Glavina del Rio T."/>
            <person name="Hammon N."/>
            <person name="Israni S."/>
            <person name="Dalin E."/>
            <person name="Tice H."/>
            <person name="Pitluck S."/>
            <person name="Kiss H."/>
            <person name="Brettin T."/>
            <person name="Bruce D."/>
            <person name="Han C."/>
            <person name="Tapia R."/>
            <person name="Gilna P."/>
            <person name="Schmutz J."/>
            <person name="Larimer F."/>
            <person name="Land M."/>
            <person name="Hauser L."/>
            <person name="Kyrpides N."/>
            <person name="Mikhailova N."/>
            <person name="Miller C.D."/>
            <person name="Richardson P."/>
        </authorList>
    </citation>
    <scope>NUCLEOTIDE SEQUENCE [LARGE SCALE GENOMIC DNA]</scope>
    <source>
        <strain>KMS</strain>
    </source>
</reference>
<proteinExistence type="inferred from homology"/>
<sequence>MASSTDVRPKITLACEVCKHRNYITKKNRRNDPDRLELKKFCPNCGTHRAHKESR</sequence>
<accession>A1UBE0</accession>
<organism>
    <name type="scientific">Mycobacterium sp. (strain KMS)</name>
    <dbReference type="NCBI Taxonomy" id="189918"/>
    <lineage>
        <taxon>Bacteria</taxon>
        <taxon>Bacillati</taxon>
        <taxon>Actinomycetota</taxon>
        <taxon>Actinomycetes</taxon>
        <taxon>Mycobacteriales</taxon>
        <taxon>Mycobacteriaceae</taxon>
        <taxon>Mycobacterium</taxon>
    </lineage>
</organism>